<gene>
    <name evidence="1" type="primary">panB</name>
    <name type="ordered locus">CBUD_1649</name>
</gene>
<protein>
    <recommendedName>
        <fullName evidence="1">3-methyl-2-oxobutanoate hydroxymethyltransferase</fullName>
        <ecNumber evidence="1">2.1.2.11</ecNumber>
    </recommendedName>
    <alternativeName>
        <fullName evidence="1">Ketopantoate hydroxymethyltransferase</fullName>
        <shortName evidence="1">KPHMT</shortName>
    </alternativeName>
</protein>
<proteinExistence type="inferred from homology"/>
<evidence type="ECO:0000255" key="1">
    <source>
        <dbReference type="HAMAP-Rule" id="MF_00156"/>
    </source>
</evidence>
<sequence>MIAMNTPDFQRMKKDNKKISMVTCYDYWSACIISQSNVDCILVGDSLAMVMYGHSTTLPATVEIMAQHIQAVSRGAPNKFIIGDMPFCSYRKDLTTSMNAVERLMQAGAQAIKLEGADAHNLKFIHHVVKSGIPVIGHLGLTPQSIYTLGGFKVQGKEPSAAKKLMADAKALAETGCFAVVLECVPSELAELITHSISIPTIGIGAGPATSGQVLVLQDLLGTNNQFQPKYLKKFLNGFELIKKALDDFDQEVKTSTYPHLETHCY</sequence>
<reference key="1">
    <citation type="journal article" date="2009" name="Infect. Immun.">
        <title>Comparative genomics reveal extensive transposon-mediated genomic plasticity and diversity among potential effector proteins within the genus Coxiella.</title>
        <authorList>
            <person name="Beare P.A."/>
            <person name="Unsworth N."/>
            <person name="Andoh M."/>
            <person name="Voth D.E."/>
            <person name="Omsland A."/>
            <person name="Gilk S.D."/>
            <person name="Williams K.P."/>
            <person name="Sobral B.W."/>
            <person name="Kupko J.J. III"/>
            <person name="Porcella S.F."/>
            <person name="Samuel J.E."/>
            <person name="Heinzen R.A."/>
        </authorList>
    </citation>
    <scope>NUCLEOTIDE SEQUENCE [LARGE SCALE GENOMIC DNA]</scope>
    <source>
        <strain>Dugway 5J108-111</strain>
    </source>
</reference>
<dbReference type="EC" id="2.1.2.11" evidence="1"/>
<dbReference type="EMBL" id="CP000733">
    <property type="protein sequence ID" value="ABS78153.2"/>
    <property type="molecule type" value="Genomic_DNA"/>
</dbReference>
<dbReference type="RefSeq" id="WP_010957565.1">
    <property type="nucleotide sequence ID" value="NC_009727.1"/>
</dbReference>
<dbReference type="SMR" id="A9KEG7"/>
<dbReference type="KEGG" id="cbd:CBUD_1649"/>
<dbReference type="HOGENOM" id="CLU_036645_1_0_6"/>
<dbReference type="UniPathway" id="UPA00028">
    <property type="reaction ID" value="UER00003"/>
</dbReference>
<dbReference type="Proteomes" id="UP000008555">
    <property type="component" value="Chromosome"/>
</dbReference>
<dbReference type="GO" id="GO:0005737">
    <property type="term" value="C:cytoplasm"/>
    <property type="evidence" value="ECO:0007669"/>
    <property type="project" value="UniProtKB-SubCell"/>
</dbReference>
<dbReference type="GO" id="GO:0003864">
    <property type="term" value="F:3-methyl-2-oxobutanoate hydroxymethyltransferase activity"/>
    <property type="evidence" value="ECO:0007669"/>
    <property type="project" value="UniProtKB-UniRule"/>
</dbReference>
<dbReference type="GO" id="GO:0000287">
    <property type="term" value="F:magnesium ion binding"/>
    <property type="evidence" value="ECO:0007669"/>
    <property type="project" value="TreeGrafter"/>
</dbReference>
<dbReference type="GO" id="GO:0015940">
    <property type="term" value="P:pantothenate biosynthetic process"/>
    <property type="evidence" value="ECO:0007669"/>
    <property type="project" value="UniProtKB-UniRule"/>
</dbReference>
<dbReference type="CDD" id="cd06557">
    <property type="entry name" value="KPHMT-like"/>
    <property type="match status" value="1"/>
</dbReference>
<dbReference type="FunFam" id="3.20.20.60:FF:000078">
    <property type="entry name" value="3-methyl-2-oxobutanoate hydroxymethyltransferase"/>
    <property type="match status" value="1"/>
</dbReference>
<dbReference type="Gene3D" id="3.20.20.60">
    <property type="entry name" value="Phosphoenolpyruvate-binding domains"/>
    <property type="match status" value="1"/>
</dbReference>
<dbReference type="HAMAP" id="MF_00156">
    <property type="entry name" value="PanB"/>
    <property type="match status" value="1"/>
</dbReference>
<dbReference type="InterPro" id="IPR003700">
    <property type="entry name" value="Pantoate_hydroxy_MeTrfase"/>
</dbReference>
<dbReference type="InterPro" id="IPR015813">
    <property type="entry name" value="Pyrv/PenolPyrv_kinase-like_dom"/>
</dbReference>
<dbReference type="InterPro" id="IPR040442">
    <property type="entry name" value="Pyrv_kinase-like_dom_sf"/>
</dbReference>
<dbReference type="NCBIfam" id="TIGR00222">
    <property type="entry name" value="panB"/>
    <property type="match status" value="1"/>
</dbReference>
<dbReference type="NCBIfam" id="NF001452">
    <property type="entry name" value="PRK00311.1"/>
    <property type="match status" value="1"/>
</dbReference>
<dbReference type="PANTHER" id="PTHR20881">
    <property type="entry name" value="3-METHYL-2-OXOBUTANOATE HYDROXYMETHYLTRANSFERASE"/>
    <property type="match status" value="1"/>
</dbReference>
<dbReference type="PANTHER" id="PTHR20881:SF0">
    <property type="entry name" value="3-METHYL-2-OXOBUTANOATE HYDROXYMETHYLTRANSFERASE"/>
    <property type="match status" value="1"/>
</dbReference>
<dbReference type="Pfam" id="PF02548">
    <property type="entry name" value="Pantoate_transf"/>
    <property type="match status" value="1"/>
</dbReference>
<dbReference type="PIRSF" id="PIRSF000388">
    <property type="entry name" value="Pantoate_hydroxy_MeTrfase"/>
    <property type="match status" value="1"/>
</dbReference>
<dbReference type="SUPFAM" id="SSF51621">
    <property type="entry name" value="Phosphoenolpyruvate/pyruvate domain"/>
    <property type="match status" value="1"/>
</dbReference>
<organism>
    <name type="scientific">Coxiella burnetii (strain Dugway 5J108-111)</name>
    <dbReference type="NCBI Taxonomy" id="434922"/>
    <lineage>
        <taxon>Bacteria</taxon>
        <taxon>Pseudomonadati</taxon>
        <taxon>Pseudomonadota</taxon>
        <taxon>Gammaproteobacteria</taxon>
        <taxon>Legionellales</taxon>
        <taxon>Coxiellaceae</taxon>
        <taxon>Coxiella</taxon>
    </lineage>
</organism>
<keyword id="KW-0963">Cytoplasm</keyword>
<keyword id="KW-0460">Magnesium</keyword>
<keyword id="KW-0479">Metal-binding</keyword>
<keyword id="KW-0566">Pantothenate biosynthesis</keyword>
<keyword id="KW-0808">Transferase</keyword>
<comment type="function">
    <text evidence="1">Catalyzes the reversible reaction in which hydroxymethyl group from 5,10-methylenetetrahydrofolate is transferred onto alpha-ketoisovalerate to form ketopantoate.</text>
</comment>
<comment type="catalytic activity">
    <reaction evidence="1">
        <text>3-methyl-2-oxobutanoate + (6R)-5,10-methylene-5,6,7,8-tetrahydrofolate + H2O = 2-dehydropantoate + (6S)-5,6,7,8-tetrahydrofolate</text>
        <dbReference type="Rhea" id="RHEA:11824"/>
        <dbReference type="ChEBI" id="CHEBI:11561"/>
        <dbReference type="ChEBI" id="CHEBI:11851"/>
        <dbReference type="ChEBI" id="CHEBI:15377"/>
        <dbReference type="ChEBI" id="CHEBI:15636"/>
        <dbReference type="ChEBI" id="CHEBI:57453"/>
        <dbReference type="EC" id="2.1.2.11"/>
    </reaction>
</comment>
<comment type="cofactor">
    <cofactor evidence="1">
        <name>Mg(2+)</name>
        <dbReference type="ChEBI" id="CHEBI:18420"/>
    </cofactor>
    <text evidence="1">Binds 1 Mg(2+) ion per subunit.</text>
</comment>
<comment type="pathway">
    <text evidence="1">Cofactor biosynthesis; (R)-pantothenate biosynthesis; (R)-pantoate from 3-methyl-2-oxobutanoate: step 1/2.</text>
</comment>
<comment type="subunit">
    <text evidence="1">Homodecamer; pentamer of dimers.</text>
</comment>
<comment type="subcellular location">
    <subcellularLocation>
        <location evidence="1">Cytoplasm</location>
    </subcellularLocation>
</comment>
<comment type="similarity">
    <text evidence="1">Belongs to the PanB family.</text>
</comment>
<name>PANB_COXBN</name>
<accession>A9KEG7</accession>
<feature type="chain" id="PRO_1000096958" description="3-methyl-2-oxobutanoate hydroxymethyltransferase">
    <location>
        <begin position="1"/>
        <end position="266"/>
    </location>
</feature>
<feature type="active site" description="Proton acceptor" evidence="1">
    <location>
        <position position="183"/>
    </location>
</feature>
<feature type="binding site" evidence="1">
    <location>
        <begin position="45"/>
        <end position="46"/>
    </location>
    <ligand>
        <name>3-methyl-2-oxobutanoate</name>
        <dbReference type="ChEBI" id="CHEBI:11851"/>
    </ligand>
</feature>
<feature type="binding site" evidence="1">
    <location>
        <position position="45"/>
    </location>
    <ligand>
        <name>Mg(2+)</name>
        <dbReference type="ChEBI" id="CHEBI:18420"/>
    </ligand>
</feature>
<feature type="binding site" evidence="1">
    <location>
        <position position="84"/>
    </location>
    <ligand>
        <name>3-methyl-2-oxobutanoate</name>
        <dbReference type="ChEBI" id="CHEBI:11851"/>
    </ligand>
</feature>
<feature type="binding site" evidence="1">
    <location>
        <position position="84"/>
    </location>
    <ligand>
        <name>Mg(2+)</name>
        <dbReference type="ChEBI" id="CHEBI:18420"/>
    </ligand>
</feature>
<feature type="binding site" evidence="1">
    <location>
        <position position="113"/>
    </location>
    <ligand>
        <name>3-methyl-2-oxobutanoate</name>
        <dbReference type="ChEBI" id="CHEBI:11851"/>
    </ligand>
</feature>
<feature type="binding site" evidence="1">
    <location>
        <position position="115"/>
    </location>
    <ligand>
        <name>Mg(2+)</name>
        <dbReference type="ChEBI" id="CHEBI:18420"/>
    </ligand>
</feature>